<name>ACDE1_METAC</name>
<organism>
    <name type="scientific">Methanosarcina acetivorans (strain ATCC 35395 / DSM 2834 / JCM 12185 / C2A)</name>
    <dbReference type="NCBI Taxonomy" id="188937"/>
    <lineage>
        <taxon>Archaea</taxon>
        <taxon>Methanobacteriati</taxon>
        <taxon>Methanobacteriota</taxon>
        <taxon>Stenosarchaea group</taxon>
        <taxon>Methanomicrobia</taxon>
        <taxon>Methanosarcinales</taxon>
        <taxon>Methanosarcinaceae</taxon>
        <taxon>Methanosarcina</taxon>
    </lineage>
</organism>
<gene>
    <name type="primary">cdhB1</name>
    <name type="ordered locus">MA_1015</name>
</gene>
<comment type="function">
    <text evidence="1">Part of a complex that catalyzes the reversible cleavage of acetyl-CoA, allowing growth on acetate as sole source of carbon and energy. The alpha-epsilon subcomponent functions as a carbon monoxide dehydrogenase. The precise role of the epsilon subunit is unclear; it may have a stabilizing role within the alpha(2)epsilon(2) component and/or be involved in electron transfer to FAD during a potential FAD-mediated CO oxidation.</text>
</comment>
<comment type="pathway">
    <text evidence="1">One-carbon metabolism; methanogenesis from acetate.</text>
</comment>
<comment type="subunit">
    <text evidence="1">Heterotetramer of two alpha and two epsilon subunits. The ACDS complex is made up of alpha, epsilon, beta, gamma and delta subunits with a probable stoichiometry of (alpha(2)epsilon(2))(4)-beta(8)-(gamma(1)delta(1))(8).</text>
</comment>
<comment type="similarity">
    <text evidence="1">Belongs to the CdhB family.</text>
</comment>
<feature type="chain" id="PRO_0000155088" description="Acetyl-CoA decarbonylase/synthase complex subunit epsilon 1">
    <location>
        <begin position="1"/>
        <end position="170"/>
    </location>
</feature>
<sequence>MVDTAKNTKLFTSYGVSTSKTVTPEIAAKLISKAKRPLLMVGTLTLDPELLDRVVKISKTANIPIAATGSSLASLADKDVDAEYINAHMLGFYLTDPNWPGLDGNGNYDTVIVLGFKKFYINQVLSAAKNFSNLKTIAIERGYIQNATMSFGNLSKADHYAALDELIDLL</sequence>
<evidence type="ECO:0000255" key="1">
    <source>
        <dbReference type="HAMAP-Rule" id="MF_01134"/>
    </source>
</evidence>
<reference key="1">
    <citation type="journal article" date="2002" name="Genome Res.">
        <title>The genome of Methanosarcina acetivorans reveals extensive metabolic and physiological diversity.</title>
        <authorList>
            <person name="Galagan J.E."/>
            <person name="Nusbaum C."/>
            <person name="Roy A."/>
            <person name="Endrizzi M.G."/>
            <person name="Macdonald P."/>
            <person name="FitzHugh W."/>
            <person name="Calvo S."/>
            <person name="Engels R."/>
            <person name="Smirnov S."/>
            <person name="Atnoor D."/>
            <person name="Brown A."/>
            <person name="Allen N."/>
            <person name="Naylor J."/>
            <person name="Stange-Thomann N."/>
            <person name="DeArellano K."/>
            <person name="Johnson R."/>
            <person name="Linton L."/>
            <person name="McEwan P."/>
            <person name="McKernan K."/>
            <person name="Talamas J."/>
            <person name="Tirrell A."/>
            <person name="Ye W."/>
            <person name="Zimmer A."/>
            <person name="Barber R.D."/>
            <person name="Cann I."/>
            <person name="Graham D.E."/>
            <person name="Grahame D.A."/>
            <person name="Guss A.M."/>
            <person name="Hedderich R."/>
            <person name="Ingram-Smith C."/>
            <person name="Kuettner H.C."/>
            <person name="Krzycki J.A."/>
            <person name="Leigh J.A."/>
            <person name="Li W."/>
            <person name="Liu J."/>
            <person name="Mukhopadhyay B."/>
            <person name="Reeve J.N."/>
            <person name="Smith K."/>
            <person name="Springer T.A."/>
            <person name="Umayam L.A."/>
            <person name="White O."/>
            <person name="White R.H."/>
            <person name="de Macario E.C."/>
            <person name="Ferry J.G."/>
            <person name="Jarrell K.F."/>
            <person name="Jing H."/>
            <person name="Macario A.J.L."/>
            <person name="Paulsen I.T."/>
            <person name="Pritchett M."/>
            <person name="Sowers K.R."/>
            <person name="Swanson R.V."/>
            <person name="Zinder S.H."/>
            <person name="Lander E."/>
            <person name="Metcalf W.W."/>
            <person name="Birren B."/>
        </authorList>
    </citation>
    <scope>NUCLEOTIDE SEQUENCE [LARGE SCALE GENOMIC DNA]</scope>
    <source>
        <strain>ATCC 35395 / DSM 2834 / JCM 12185 / C2A</strain>
    </source>
</reference>
<protein>
    <recommendedName>
        <fullName evidence="1">Acetyl-CoA decarbonylase/synthase complex subunit epsilon 1</fullName>
        <shortName evidence="1">ACDS complex subunit epsilon 1</shortName>
    </recommendedName>
    <alternativeName>
        <fullName evidence="1">ACDS complex carbon monoxide dehydrogenase subunit epsilon 1</fullName>
        <shortName evidence="1">ACDS CODH subunit epsilon 1</shortName>
    </alternativeName>
</protein>
<proteinExistence type="inferred from homology"/>
<accession>Q8TRZ5</accession>
<dbReference type="EMBL" id="AE010299">
    <property type="protein sequence ID" value="AAM04445.1"/>
    <property type="molecule type" value="Genomic_DNA"/>
</dbReference>
<dbReference type="RefSeq" id="WP_011021050.1">
    <property type="nucleotide sequence ID" value="NC_003552.1"/>
</dbReference>
<dbReference type="SMR" id="Q8TRZ5"/>
<dbReference type="FunCoup" id="Q8TRZ5">
    <property type="interactions" value="71"/>
</dbReference>
<dbReference type="STRING" id="188937.MA_1015"/>
<dbReference type="EnsemblBacteria" id="AAM04445">
    <property type="protein sequence ID" value="AAM04445"/>
    <property type="gene ID" value="MA_1015"/>
</dbReference>
<dbReference type="GeneID" id="1472905"/>
<dbReference type="KEGG" id="mac:MA_1015"/>
<dbReference type="HOGENOM" id="CLU_123700_0_0_2"/>
<dbReference type="InParanoid" id="Q8TRZ5"/>
<dbReference type="OrthoDB" id="120588at2157"/>
<dbReference type="PhylomeDB" id="Q8TRZ5"/>
<dbReference type="UniPathway" id="UPA00642"/>
<dbReference type="Proteomes" id="UP000002487">
    <property type="component" value="Chromosome"/>
</dbReference>
<dbReference type="GO" id="GO:0019385">
    <property type="term" value="P:methanogenesis, from acetate"/>
    <property type="evidence" value="ECO:0007669"/>
    <property type="project" value="UniProtKB-UniRule"/>
</dbReference>
<dbReference type="Gene3D" id="3.40.50.1220">
    <property type="entry name" value="TPP-binding domain"/>
    <property type="match status" value="1"/>
</dbReference>
<dbReference type="HAMAP" id="MF_01134">
    <property type="entry name" value="CdhB"/>
    <property type="match status" value="1"/>
</dbReference>
<dbReference type="InterPro" id="IPR003704">
    <property type="entry name" value="CdhB"/>
</dbReference>
<dbReference type="InterPro" id="IPR029035">
    <property type="entry name" value="DHS-like_NAD/FAD-binding_dom"/>
</dbReference>
<dbReference type="NCBIfam" id="TIGR00315">
    <property type="entry name" value="cdhB"/>
    <property type="match status" value="1"/>
</dbReference>
<dbReference type="Pfam" id="PF02552">
    <property type="entry name" value="CO_dh"/>
    <property type="match status" value="1"/>
</dbReference>
<dbReference type="PIRSF" id="PIRSF006035">
    <property type="entry name" value="CO_dh_b_ACDS_e"/>
    <property type="match status" value="1"/>
</dbReference>
<dbReference type="SUPFAM" id="SSF52467">
    <property type="entry name" value="DHS-like NAD/FAD-binding domain"/>
    <property type="match status" value="1"/>
</dbReference>
<keyword id="KW-0484">Methanogenesis</keyword>
<keyword id="KW-1185">Reference proteome</keyword>